<reference key="1">
    <citation type="submission" date="2007-06" db="EMBL/GenBank/DDBJ databases">
        <authorList>
            <consortium name="NIH - Mammalian Gene Collection (MGC) project"/>
        </authorList>
    </citation>
    <scope>NUCLEOTIDE SEQUENCE [LARGE SCALE MRNA]</scope>
    <source>
        <strain>Hereford</strain>
        <tissue>Thymus</tissue>
    </source>
</reference>
<protein>
    <recommendedName>
        <fullName>Targeting protein for Xklp2</fullName>
    </recommendedName>
</protein>
<accession>A6H6Z7</accession>
<gene>
    <name type="primary">TPX2</name>
</gene>
<sequence length="704" mass="81593">MSQVTTSYSYDAPTDFINFSSLTDEEDMQHIDSWFDEKANLENKFTGKDGTGGLYQGKTPLRKANLHRDVTPLRPVDNTYNKQAEKENLVEESIPSNECPSMKVKETTSRNNPVQPQRRSLRLSAKKNLEQKEKQHVKMKAKRCGTPVIINEFPPSKKMKVQKILKSTEEQELEKRMKMQQEVVEMRKRNEEFKKFALAGAGQPVKKSVSQVTKAVDFHFRTDERVKQHPKNQEEYKEVNFTSELRKHPPSPARVTKGCTIVMPFNLSQGKKRTFDETASTYVPLAQQVEAFHKRTPTRYHLRNRKDDIMPLPSKSVVRICRDPQTPVLQTKHRTRPVTCKSAADLEAEELEKQQQYKFKAQELDPRILEGGPILPKKPPVKPPTQPVGFDLEIEKRIQERESKKKLEEEHYEFHSRPCPTKILEDVVGVPEKKELPITVPKSPAFALKNRIRMPTKEDKEEEEPVMIRAQPVPYFGMPFKPQIPVGRTVEVCPFSFDSRDKERQLQKEKKIKELQKGEVPKFKAHPLPHFDTINLPEKKVKNTTQVEPFCLETDRRGALKAQTWKHQLDEELKQQKEAACFKARPNTVISQEPFVPKREKKSVIEGLSGSLVQEPFQLATEKRAKERQELEKRMAEVEALKAQQLEEARQQEEEQQKEELARLRKELVHKANPIRRYQGVEVKSSDQPLTVPVSPKFSTRFHC</sequence>
<name>TPX2_BOVIN</name>
<proteinExistence type="evidence at transcript level"/>
<organism>
    <name type="scientific">Bos taurus</name>
    <name type="common">Bovine</name>
    <dbReference type="NCBI Taxonomy" id="9913"/>
    <lineage>
        <taxon>Eukaryota</taxon>
        <taxon>Metazoa</taxon>
        <taxon>Chordata</taxon>
        <taxon>Craniata</taxon>
        <taxon>Vertebrata</taxon>
        <taxon>Euteleostomi</taxon>
        <taxon>Mammalia</taxon>
        <taxon>Eutheria</taxon>
        <taxon>Laurasiatheria</taxon>
        <taxon>Artiodactyla</taxon>
        <taxon>Ruminantia</taxon>
        <taxon>Pecora</taxon>
        <taxon>Bovidae</taxon>
        <taxon>Bovinae</taxon>
        <taxon>Bos</taxon>
    </lineage>
</organism>
<feature type="chain" id="PRO_0000393111" description="Targeting protein for Xklp2">
    <location>
        <begin position="1"/>
        <end position="704"/>
    </location>
</feature>
<feature type="region of interest" description="Disordered" evidence="3">
    <location>
        <begin position="92"/>
        <end position="119"/>
    </location>
</feature>
<feature type="compositionally biased region" description="Polar residues" evidence="3">
    <location>
        <begin position="109"/>
        <end position="118"/>
    </location>
</feature>
<feature type="modified residue" description="Phosphothreonine" evidence="2">
    <location>
        <position position="59"/>
    </location>
</feature>
<feature type="modified residue" description="Phosphothreonine" evidence="2">
    <location>
        <position position="71"/>
    </location>
</feature>
<feature type="modified residue" description="Phosphoserine" evidence="2">
    <location>
        <position position="120"/>
    </location>
</feature>
<feature type="modified residue" description="Phosphoserine" evidence="2">
    <location>
        <position position="124"/>
    </location>
</feature>
<feature type="modified residue" description="N6-acetyllysine" evidence="1">
    <location>
        <position position="127"/>
    </location>
</feature>
<feature type="modified residue" description="Phosphothreonine" evidence="2">
    <location>
        <position position="146"/>
    </location>
</feature>
<feature type="modified residue" description="Phosphoserine" evidence="2">
    <location>
        <position position="251"/>
    </location>
</feature>
<feature type="modified residue" description="Phosphoserine" evidence="2">
    <location>
        <position position="268"/>
    </location>
</feature>
<feature type="modified residue" description="Phosphothreonine" evidence="2">
    <location>
        <position position="296"/>
    </location>
</feature>
<feature type="modified residue" description="Phosphoserine" evidence="2">
    <location>
        <position position="316"/>
    </location>
</feature>
<feature type="modified residue" description="Phosphothreonine" evidence="2">
    <location>
        <position position="326"/>
    </location>
</feature>
<feature type="modified residue" description="N6-acetyllysine" evidence="1">
    <location>
        <position position="332"/>
    </location>
</feature>
<feature type="modified residue" description="Phosphoserine" evidence="2">
    <location>
        <position position="443"/>
    </location>
</feature>
<feature type="modified residue" description="Phosphothreonine" evidence="2">
    <location>
        <position position="456"/>
    </location>
</feature>
<feature type="modified residue" description="Phosphoserine" evidence="2">
    <location>
        <position position="695"/>
    </location>
</feature>
<feature type="cross-link" description="Glycyl lysine isopeptide (Lys-Gly) (interchain with G-Cter in SUMO2)" evidence="2">
    <location>
        <position position="434"/>
    </location>
</feature>
<feature type="cross-link" description="Glycyl lysine isopeptide (Lys-Gly) (interchain with G-Cter in SUMO2)" evidence="2">
    <location>
        <position position="457"/>
    </location>
</feature>
<feature type="cross-link" description="Glycyl lysine isopeptide (Lys-Gly) (interchain with G-Cter in SUMO2)" evidence="2">
    <location>
        <position position="598"/>
    </location>
</feature>
<feature type="cross-link" description="Glycyl lysine isopeptide (Lys-Gly) (interchain with G-Cter in SUMO2)" evidence="2">
    <location>
        <position position="697"/>
    </location>
</feature>
<evidence type="ECO:0000250" key="1">
    <source>
        <dbReference type="UniProtKB" id="A2APB8"/>
    </source>
</evidence>
<evidence type="ECO:0000250" key="2">
    <source>
        <dbReference type="UniProtKB" id="Q9ULW0"/>
    </source>
</evidence>
<evidence type="ECO:0000256" key="3">
    <source>
        <dbReference type="SAM" id="MobiDB-lite"/>
    </source>
</evidence>
<evidence type="ECO:0000305" key="4"/>
<keyword id="KW-0007">Acetylation</keyword>
<keyword id="KW-0053">Apoptosis</keyword>
<keyword id="KW-0131">Cell cycle</keyword>
<keyword id="KW-0132">Cell division</keyword>
<keyword id="KW-0963">Cytoplasm</keyword>
<keyword id="KW-0206">Cytoskeleton</keyword>
<keyword id="KW-1017">Isopeptide bond</keyword>
<keyword id="KW-0493">Microtubule</keyword>
<keyword id="KW-0498">Mitosis</keyword>
<keyword id="KW-0539">Nucleus</keyword>
<keyword id="KW-0597">Phosphoprotein</keyword>
<keyword id="KW-1185">Reference proteome</keyword>
<keyword id="KW-0832">Ubl conjugation</keyword>
<dbReference type="EMBL" id="BC146057">
    <property type="protein sequence ID" value="AAI46058.1"/>
    <property type="molecule type" value="mRNA"/>
</dbReference>
<dbReference type="RefSeq" id="NP_001092368.1">
    <property type="nucleotide sequence ID" value="NM_001098898.1"/>
</dbReference>
<dbReference type="SMR" id="A6H6Z7"/>
<dbReference type="FunCoup" id="A6H6Z7">
    <property type="interactions" value="657"/>
</dbReference>
<dbReference type="STRING" id="9913.ENSBTAP00000070885"/>
<dbReference type="PaxDb" id="9913-ENSBTAP00000049473"/>
<dbReference type="GeneID" id="507226"/>
<dbReference type="KEGG" id="bta:507226"/>
<dbReference type="CTD" id="22974"/>
<dbReference type="eggNOG" id="ENOG502QVQS">
    <property type="taxonomic scope" value="Eukaryota"/>
</dbReference>
<dbReference type="InParanoid" id="A6H6Z7"/>
<dbReference type="OrthoDB" id="1684416at2759"/>
<dbReference type="Proteomes" id="UP000009136">
    <property type="component" value="Unplaced"/>
</dbReference>
<dbReference type="GO" id="GO:0005737">
    <property type="term" value="C:cytoplasm"/>
    <property type="evidence" value="ECO:0007669"/>
    <property type="project" value="UniProtKB-KW"/>
</dbReference>
<dbReference type="GO" id="GO:0005874">
    <property type="term" value="C:microtubule"/>
    <property type="evidence" value="ECO:0007669"/>
    <property type="project" value="UniProtKB-KW"/>
</dbReference>
<dbReference type="GO" id="GO:0005634">
    <property type="term" value="C:nucleus"/>
    <property type="evidence" value="ECO:0007669"/>
    <property type="project" value="UniProtKB-SubCell"/>
</dbReference>
<dbReference type="GO" id="GO:0005819">
    <property type="term" value="C:spindle"/>
    <property type="evidence" value="ECO:0000250"/>
    <property type="project" value="UniProtKB"/>
</dbReference>
<dbReference type="GO" id="GO:0000922">
    <property type="term" value="C:spindle pole"/>
    <property type="evidence" value="ECO:0007669"/>
    <property type="project" value="UniProtKB-SubCell"/>
</dbReference>
<dbReference type="GO" id="GO:0061676">
    <property type="term" value="F:importin-alpha family protein binding"/>
    <property type="evidence" value="ECO:0000250"/>
    <property type="project" value="UniProtKB"/>
</dbReference>
<dbReference type="GO" id="GO:0006915">
    <property type="term" value="P:apoptotic process"/>
    <property type="evidence" value="ECO:0007669"/>
    <property type="project" value="UniProtKB-KW"/>
</dbReference>
<dbReference type="GO" id="GO:0051301">
    <property type="term" value="P:cell division"/>
    <property type="evidence" value="ECO:0007669"/>
    <property type="project" value="UniProtKB-KW"/>
</dbReference>
<dbReference type="GO" id="GO:0090307">
    <property type="term" value="P:mitotic spindle assembly"/>
    <property type="evidence" value="ECO:0000250"/>
    <property type="project" value="UniProtKB"/>
</dbReference>
<dbReference type="GO" id="GO:0060236">
    <property type="term" value="P:regulation of mitotic spindle organization"/>
    <property type="evidence" value="ECO:0007669"/>
    <property type="project" value="InterPro"/>
</dbReference>
<dbReference type="InterPro" id="IPR015128">
    <property type="entry name" value="Aurora-A-bd"/>
</dbReference>
<dbReference type="InterPro" id="IPR027329">
    <property type="entry name" value="TPX2_C"/>
</dbReference>
<dbReference type="InterPro" id="IPR027330">
    <property type="entry name" value="TPX2_central_dom"/>
</dbReference>
<dbReference type="InterPro" id="IPR009675">
    <property type="entry name" value="TPX2_fam"/>
</dbReference>
<dbReference type="PANTHER" id="PTHR14326">
    <property type="entry name" value="TARGETING PROTEIN FOR XKLP2"/>
    <property type="match status" value="1"/>
</dbReference>
<dbReference type="PANTHER" id="PTHR14326:SF44">
    <property type="entry name" value="TARGETING PROTEIN FOR XKLP2"/>
    <property type="match status" value="1"/>
</dbReference>
<dbReference type="Pfam" id="PF09041">
    <property type="entry name" value="Aurora-A_bind"/>
    <property type="match status" value="1"/>
</dbReference>
<dbReference type="Pfam" id="PF06886">
    <property type="entry name" value="TPX2"/>
    <property type="match status" value="2"/>
</dbReference>
<dbReference type="Pfam" id="PF12214">
    <property type="entry name" value="TPX2_importin"/>
    <property type="match status" value="1"/>
</dbReference>
<comment type="function">
    <text evidence="2">Spindle assembly factor required for normal assembly of mitotic spindles. Required for normal assembly of microtubules during apoptosis. Required for chromatin and/or kinetochore dependent microtubule nucleation. Mediates AURKA localization to spindle microtubules. Activates AURKA by promoting its autophosphorylation at 'Thr-288' and protects this residue against dephosphorylation. TPX2 is inactivated upon binding to importin-alpha. At the onset of mitosis, GOLGA2 interacts with importin-alpha, liberating TPX2 from importin-alpha, allowing TPX2 to activate AURKA kinase and stimulate local microtubule nucleation.</text>
</comment>
<comment type="subunit">
    <text evidence="1 2">Interacts with AURKA (By similarity). Interacts with importin-alpha; leading to inactivate TPX2 (By similarity). Interacts with HNRNPU; this interaction recruits HNRNPU to spindle microtubules (MTs) (By similarity). Interacts with BCL2L10 (By similarity). Interacts with KIF11 (By similarity).</text>
</comment>
<comment type="subcellular location">
    <subcellularLocation>
        <location evidence="2">Nucleus</location>
    </subcellularLocation>
    <subcellularLocation>
        <location evidence="2">Cytoplasm</location>
        <location evidence="2">Cytoskeleton</location>
        <location evidence="2">Spindle</location>
    </subcellularLocation>
    <subcellularLocation>
        <location evidence="2">Cytoplasm</location>
        <location evidence="2">Cytoskeleton</location>
        <location evidence="2">Spindle pole</location>
    </subcellularLocation>
    <text evidence="2">During mitosis it is strictly associated with the spindle pole and with the mitotic spindle, whereas during S and G2, it is diffusely distributed throughout the nucleus. Is released from the nucleus in apoptotic cells and is detected on apoptotic microtubules.</text>
</comment>
<comment type="similarity">
    <text evidence="4">Belongs to the TPX2 family.</text>
</comment>